<sequence>MTQAAEATLPPLNVPSYVKHARLIDWVQGVVALTKPARVVWCDGSQEEADRLCEQMVQAGTMRRLNPAKRPNSYLAWSDPSDVARVEDRTFICSQREEDAGPTNNWAAPAEMRNTLQGLFDGAMRGRTLYVVPFSMGPLGSPIAHIGVELSDSPYVAVNMRIMTRMGRAVWDVLGADGEFVPCVHSVGMPLAEGQADVAWPCNPVKYIVHYPETREIWSFGSGYGGNALLGKKCFALRIASTMGRDEGWLAEHMLILGVTTPKGRKFHVAAAFPSACGKTNFAMLIPPSGMDGWKVSTIGDDIAWIKPGQDGRLRAINPEAGYFGVAPGTSEKTNPNAMATLKANVIFTNVALTDDGDVWWEGMTDTPPAHLIDWQGKDWTPEIARETGRKAAHPNARFTAPASQCPSIDPEWENPQGVAIDAFIFGGRRSTTIPLVTEARDWVQGVYMAATMGSETTAAAVGQQGVVRRDPFAMLPFCGYNMADYFNHWLAVGQRLADAGATLPRIYCVNWFRKGPNGKFVWPGFGENMRVLKWMLGRLSGEAGGQEQVFGISPSYGDVDWTGLEFTPDQFQQVISVEAPAWREELALHGELFEQLAQGLPPALSRAKADIEHRLAAVQA</sequence>
<accession>Q2L1L0</accession>
<reference key="1">
    <citation type="journal article" date="2006" name="J. Bacteriol.">
        <title>Comparison of the genome sequence of the poultry pathogen Bordetella avium with those of B. bronchiseptica, B. pertussis, and B. parapertussis reveals extensive diversity in surface structures associated with host interaction.</title>
        <authorList>
            <person name="Sebaihia M."/>
            <person name="Preston A."/>
            <person name="Maskell D.J."/>
            <person name="Kuzmiak H."/>
            <person name="Connell T.D."/>
            <person name="King N.D."/>
            <person name="Orndorff P.E."/>
            <person name="Miyamoto D.M."/>
            <person name="Thomson N.R."/>
            <person name="Harris D."/>
            <person name="Goble A."/>
            <person name="Lord A."/>
            <person name="Murphy L."/>
            <person name="Quail M.A."/>
            <person name="Rutter S."/>
            <person name="Squares R."/>
            <person name="Squares S."/>
            <person name="Woodward J."/>
            <person name="Parkhill J."/>
            <person name="Temple L.M."/>
        </authorList>
    </citation>
    <scope>NUCLEOTIDE SEQUENCE [LARGE SCALE GENOMIC DNA]</scope>
    <source>
        <strain>197N</strain>
    </source>
</reference>
<proteinExistence type="inferred from homology"/>
<comment type="function">
    <text evidence="1">Catalyzes the conversion of oxaloacetate (OAA) to phosphoenolpyruvate (PEP), the rate-limiting step in the metabolic pathway that produces glucose from lactate and other precursors derived from the citric acid cycle.</text>
</comment>
<comment type="catalytic activity">
    <reaction evidence="1">
        <text>oxaloacetate + GTP = phosphoenolpyruvate + GDP + CO2</text>
        <dbReference type="Rhea" id="RHEA:10388"/>
        <dbReference type="ChEBI" id="CHEBI:16452"/>
        <dbReference type="ChEBI" id="CHEBI:16526"/>
        <dbReference type="ChEBI" id="CHEBI:37565"/>
        <dbReference type="ChEBI" id="CHEBI:58189"/>
        <dbReference type="ChEBI" id="CHEBI:58702"/>
        <dbReference type="EC" id="4.1.1.32"/>
    </reaction>
</comment>
<comment type="cofactor">
    <cofactor evidence="1">
        <name>Mn(2+)</name>
        <dbReference type="ChEBI" id="CHEBI:29035"/>
    </cofactor>
    <text evidence="1">Binds 1 Mn(2+) ion per subunit.</text>
</comment>
<comment type="pathway">
    <text evidence="1">Carbohydrate biosynthesis; gluconeogenesis.</text>
</comment>
<comment type="subunit">
    <text evidence="1">Monomer.</text>
</comment>
<comment type="subcellular location">
    <subcellularLocation>
        <location evidence="1">Cytoplasm</location>
    </subcellularLocation>
</comment>
<comment type="similarity">
    <text evidence="1">Belongs to the phosphoenolpyruvate carboxykinase [GTP] family.</text>
</comment>
<protein>
    <recommendedName>
        <fullName evidence="1">Phosphoenolpyruvate carboxykinase [GTP]</fullName>
        <shortName evidence="1">PEP carboxykinase</shortName>
        <shortName evidence="1">PEPCK</shortName>
        <ecNumber evidence="1">4.1.1.32</ecNumber>
    </recommendedName>
</protein>
<feature type="chain" id="PRO_1000060287" description="Phosphoenolpyruvate carboxykinase [GTP]">
    <location>
        <begin position="1"/>
        <end position="621"/>
    </location>
</feature>
<feature type="active site" evidence="1">
    <location>
        <position position="277"/>
    </location>
</feature>
<feature type="binding site" evidence="1">
    <location>
        <position position="85"/>
    </location>
    <ligand>
        <name>substrate</name>
    </ligand>
</feature>
<feature type="binding site" evidence="1">
    <location>
        <begin position="224"/>
        <end position="226"/>
    </location>
    <ligand>
        <name>substrate</name>
    </ligand>
</feature>
<feature type="binding site" evidence="1">
    <location>
        <position position="233"/>
    </location>
    <ligand>
        <name>Mn(2+)</name>
        <dbReference type="ChEBI" id="CHEBI:29035"/>
    </ligand>
</feature>
<feature type="binding site" evidence="1">
    <location>
        <position position="253"/>
    </location>
    <ligand>
        <name>Mn(2+)</name>
        <dbReference type="ChEBI" id="CHEBI:29035"/>
    </ligand>
</feature>
<feature type="binding site" evidence="1">
    <location>
        <position position="275"/>
    </location>
    <ligand>
        <name>substrate</name>
    </ligand>
</feature>
<feature type="binding site" evidence="1">
    <location>
        <begin position="276"/>
        <end position="281"/>
    </location>
    <ligand>
        <name>GTP</name>
        <dbReference type="ChEBI" id="CHEBI:37565"/>
    </ligand>
</feature>
<feature type="binding site" evidence="1">
    <location>
        <position position="302"/>
    </location>
    <ligand>
        <name>Mn(2+)</name>
        <dbReference type="ChEBI" id="CHEBI:29035"/>
    </ligand>
</feature>
<feature type="binding site" evidence="1">
    <location>
        <begin position="396"/>
        <end position="398"/>
    </location>
    <ligand>
        <name>substrate</name>
    </ligand>
</feature>
<feature type="binding site" evidence="1">
    <location>
        <position position="398"/>
    </location>
    <ligand>
        <name>GTP</name>
        <dbReference type="ChEBI" id="CHEBI:37565"/>
    </ligand>
</feature>
<feature type="binding site" evidence="1">
    <location>
        <position position="429"/>
    </location>
    <ligand>
        <name>GTP</name>
        <dbReference type="ChEBI" id="CHEBI:37565"/>
    </ligand>
</feature>
<feature type="binding site" evidence="1">
    <location>
        <begin position="526"/>
        <end position="529"/>
    </location>
    <ligand>
        <name>GTP</name>
        <dbReference type="ChEBI" id="CHEBI:37565"/>
    </ligand>
</feature>
<organism>
    <name type="scientific">Bordetella avium (strain 197N)</name>
    <dbReference type="NCBI Taxonomy" id="360910"/>
    <lineage>
        <taxon>Bacteria</taxon>
        <taxon>Pseudomonadati</taxon>
        <taxon>Pseudomonadota</taxon>
        <taxon>Betaproteobacteria</taxon>
        <taxon>Burkholderiales</taxon>
        <taxon>Alcaligenaceae</taxon>
        <taxon>Bordetella</taxon>
    </lineage>
</organism>
<gene>
    <name evidence="1" type="primary">pckG</name>
    <name type="ordered locus">BAV1626</name>
</gene>
<name>PCKG_BORA1</name>
<dbReference type="EC" id="4.1.1.32" evidence="1"/>
<dbReference type="EMBL" id="AM167904">
    <property type="protein sequence ID" value="CAJ49235.1"/>
    <property type="molecule type" value="Genomic_DNA"/>
</dbReference>
<dbReference type="RefSeq" id="WP_012417297.1">
    <property type="nucleotide sequence ID" value="NC_010645.1"/>
</dbReference>
<dbReference type="SMR" id="Q2L1L0"/>
<dbReference type="STRING" id="360910.BAV1626"/>
<dbReference type="KEGG" id="bav:BAV1626"/>
<dbReference type="eggNOG" id="COG1274">
    <property type="taxonomic scope" value="Bacteria"/>
</dbReference>
<dbReference type="HOGENOM" id="CLU_028872_1_1_4"/>
<dbReference type="OrthoDB" id="9758871at2"/>
<dbReference type="UniPathway" id="UPA00138"/>
<dbReference type="Proteomes" id="UP000001977">
    <property type="component" value="Chromosome"/>
</dbReference>
<dbReference type="GO" id="GO:0005829">
    <property type="term" value="C:cytosol"/>
    <property type="evidence" value="ECO:0007669"/>
    <property type="project" value="TreeGrafter"/>
</dbReference>
<dbReference type="GO" id="GO:0005525">
    <property type="term" value="F:GTP binding"/>
    <property type="evidence" value="ECO:0007669"/>
    <property type="project" value="UniProtKB-UniRule"/>
</dbReference>
<dbReference type="GO" id="GO:0030145">
    <property type="term" value="F:manganese ion binding"/>
    <property type="evidence" value="ECO:0007669"/>
    <property type="project" value="UniProtKB-UniRule"/>
</dbReference>
<dbReference type="GO" id="GO:0004613">
    <property type="term" value="F:phosphoenolpyruvate carboxykinase (GTP) activity"/>
    <property type="evidence" value="ECO:0007669"/>
    <property type="project" value="UniProtKB-UniRule"/>
</dbReference>
<dbReference type="GO" id="GO:0071333">
    <property type="term" value="P:cellular response to glucose stimulus"/>
    <property type="evidence" value="ECO:0007669"/>
    <property type="project" value="TreeGrafter"/>
</dbReference>
<dbReference type="GO" id="GO:0006094">
    <property type="term" value="P:gluconeogenesis"/>
    <property type="evidence" value="ECO:0007669"/>
    <property type="project" value="UniProtKB-UniRule"/>
</dbReference>
<dbReference type="GO" id="GO:0046327">
    <property type="term" value="P:glycerol biosynthetic process from pyruvate"/>
    <property type="evidence" value="ECO:0007669"/>
    <property type="project" value="TreeGrafter"/>
</dbReference>
<dbReference type="GO" id="GO:0006107">
    <property type="term" value="P:oxaloacetate metabolic process"/>
    <property type="evidence" value="ECO:0007669"/>
    <property type="project" value="TreeGrafter"/>
</dbReference>
<dbReference type="GO" id="GO:0019543">
    <property type="term" value="P:propionate catabolic process"/>
    <property type="evidence" value="ECO:0007669"/>
    <property type="project" value="TreeGrafter"/>
</dbReference>
<dbReference type="GO" id="GO:0033993">
    <property type="term" value="P:response to lipid"/>
    <property type="evidence" value="ECO:0007669"/>
    <property type="project" value="TreeGrafter"/>
</dbReference>
<dbReference type="GO" id="GO:0042594">
    <property type="term" value="P:response to starvation"/>
    <property type="evidence" value="ECO:0007669"/>
    <property type="project" value="TreeGrafter"/>
</dbReference>
<dbReference type="CDD" id="cd00819">
    <property type="entry name" value="PEPCK_GTP"/>
    <property type="match status" value="1"/>
</dbReference>
<dbReference type="FunFam" id="3.40.449.10:FF:000005">
    <property type="entry name" value="Phosphoenolpyruvate carboxykinase [GTP]"/>
    <property type="match status" value="1"/>
</dbReference>
<dbReference type="Gene3D" id="3.90.228.20">
    <property type="match status" value="1"/>
</dbReference>
<dbReference type="Gene3D" id="3.40.449.10">
    <property type="entry name" value="Phosphoenolpyruvate Carboxykinase, domain 1"/>
    <property type="match status" value="1"/>
</dbReference>
<dbReference type="Gene3D" id="2.170.8.10">
    <property type="entry name" value="Phosphoenolpyruvate Carboxykinase, domain 2"/>
    <property type="match status" value="1"/>
</dbReference>
<dbReference type="HAMAP" id="MF_00452">
    <property type="entry name" value="PEPCK_GTP"/>
    <property type="match status" value="1"/>
</dbReference>
<dbReference type="InterPro" id="IPR018091">
    <property type="entry name" value="PEP_carboxykin_GTP_CS"/>
</dbReference>
<dbReference type="InterPro" id="IPR013035">
    <property type="entry name" value="PEP_carboxykinase_C"/>
</dbReference>
<dbReference type="InterPro" id="IPR008209">
    <property type="entry name" value="PEP_carboxykinase_GTP"/>
</dbReference>
<dbReference type="InterPro" id="IPR035077">
    <property type="entry name" value="PEP_carboxykinase_GTP_C"/>
</dbReference>
<dbReference type="InterPro" id="IPR035078">
    <property type="entry name" value="PEP_carboxykinase_GTP_N"/>
</dbReference>
<dbReference type="InterPro" id="IPR008210">
    <property type="entry name" value="PEP_carboxykinase_N"/>
</dbReference>
<dbReference type="NCBIfam" id="NF003253">
    <property type="entry name" value="PRK04210.1"/>
    <property type="match status" value="1"/>
</dbReference>
<dbReference type="PANTHER" id="PTHR11561">
    <property type="entry name" value="PHOSPHOENOLPYRUVATE CARBOXYKINASE"/>
    <property type="match status" value="1"/>
</dbReference>
<dbReference type="PANTHER" id="PTHR11561:SF0">
    <property type="entry name" value="PHOSPHOENOLPYRUVATE CARBOXYKINASE [GTP]-RELATED"/>
    <property type="match status" value="1"/>
</dbReference>
<dbReference type="Pfam" id="PF00821">
    <property type="entry name" value="PEPCK_GTP"/>
    <property type="match status" value="1"/>
</dbReference>
<dbReference type="Pfam" id="PF17297">
    <property type="entry name" value="PEPCK_N"/>
    <property type="match status" value="1"/>
</dbReference>
<dbReference type="PIRSF" id="PIRSF001348">
    <property type="entry name" value="PEP_carboxykinase_GTP"/>
    <property type="match status" value="1"/>
</dbReference>
<dbReference type="SUPFAM" id="SSF68923">
    <property type="entry name" value="PEP carboxykinase N-terminal domain"/>
    <property type="match status" value="1"/>
</dbReference>
<dbReference type="SUPFAM" id="SSF53795">
    <property type="entry name" value="PEP carboxykinase-like"/>
    <property type="match status" value="1"/>
</dbReference>
<dbReference type="PROSITE" id="PS00505">
    <property type="entry name" value="PEPCK_GTP"/>
    <property type="match status" value="1"/>
</dbReference>
<keyword id="KW-0963">Cytoplasm</keyword>
<keyword id="KW-0210">Decarboxylase</keyword>
<keyword id="KW-0312">Gluconeogenesis</keyword>
<keyword id="KW-0342">GTP-binding</keyword>
<keyword id="KW-0456">Lyase</keyword>
<keyword id="KW-0464">Manganese</keyword>
<keyword id="KW-0479">Metal-binding</keyword>
<keyword id="KW-0547">Nucleotide-binding</keyword>
<keyword id="KW-1185">Reference proteome</keyword>
<evidence type="ECO:0000255" key="1">
    <source>
        <dbReference type="HAMAP-Rule" id="MF_00452"/>
    </source>
</evidence>